<comment type="function">
    <text evidence="1">Component of the ERMES/MDM complex, which serves as a molecular tether to connect the endoplasmic reticulum (ER) and mitochondria. Components of this complex are involved in the control of mitochondrial shape and protein biogenesis, and function in nonvesicular lipid trafficking between the ER and mitochondria. MDM12 is required for the interaction of the ER-resident membrane protein MMM1 and the outer mitochondrial membrane-resident beta-barrel protein MDM10. The MDM12-MMM1 subcomplex functions in the major beta-barrel assembly pathway that is responsible for biogenesis of all mitochondrial outer membrane beta-barrel proteins, and acts in a late step after the SAM complex. The MDM10-MDM12-MMM1 subcomplex further acts in the TOM40-specific pathway after the action of the MDM12-MMM1 complex. Essential for establishing and maintaining the structure of mitochondria and maintenance of mtDNA nucleoids.</text>
</comment>
<comment type="subunit">
    <text evidence="1">Component of the ER-mitochondria encounter structure (ERMES) or MDM complex, composed of MMM1, MDM10, MDM12 and MDM34. A MMM1 homodimer associates with one molecule of MDM12 on each side in a pairwise head-to-tail manner, and the SMP-LTD domains of MMM1 and MDM12 generate a continuous hydrophobic tunnel for phospholipid trafficking.</text>
</comment>
<comment type="subcellular location">
    <subcellularLocation>
        <location evidence="1">Mitochondrion outer membrane</location>
        <topology evidence="1">Peripheral membrane protein</topology>
        <orientation evidence="1">Cytoplasmic side</orientation>
    </subcellularLocation>
    <subcellularLocation>
        <location evidence="1">Endoplasmic reticulum membrane</location>
        <topology evidence="1">Peripheral membrane protein</topology>
        <orientation evidence="1">Cytoplasmic side</orientation>
    </subcellularLocation>
    <text evidence="1">The ERMES/MDM complex localizes to a few discrete foci (around 10 per single cell), that represent mitochondria-endoplasmic reticulum junctions. These foci are often found next to mtDNA nucleoids.</text>
</comment>
<comment type="domain">
    <text evidence="1">The SMP-LTD domain is a barrel-like domain that can bind various types of glycerophospholipids in its interior and mediate their transfer between two adjacent bilayers.</text>
</comment>
<comment type="similarity">
    <text evidence="1">Belongs to the MDM12 family.</text>
</comment>
<evidence type="ECO:0000255" key="1">
    <source>
        <dbReference type="HAMAP-Rule" id="MF_03104"/>
    </source>
</evidence>
<evidence type="ECO:0000256" key="2">
    <source>
        <dbReference type="SAM" id="MobiDB-lite"/>
    </source>
</evidence>
<feature type="chain" id="PRO_0000384277" description="Mitochondrial distribution and morphology protein 12">
    <location>
        <begin position="1"/>
        <end position="428"/>
    </location>
</feature>
<feature type="domain" description="SMP-LTD" evidence="1">
    <location>
        <begin position="1"/>
        <end position="387"/>
    </location>
</feature>
<feature type="region of interest" description="Disordered" evidence="2">
    <location>
        <begin position="75"/>
        <end position="168"/>
    </location>
</feature>
<feature type="region of interest" description="Disordered" evidence="2">
    <location>
        <begin position="387"/>
        <end position="428"/>
    </location>
</feature>
<feature type="compositionally biased region" description="Basic and acidic residues" evidence="2">
    <location>
        <begin position="81"/>
        <end position="96"/>
    </location>
</feature>
<feature type="compositionally biased region" description="Acidic residues" evidence="2">
    <location>
        <begin position="106"/>
        <end position="133"/>
    </location>
</feature>
<feature type="compositionally biased region" description="Polar residues" evidence="2">
    <location>
        <begin position="146"/>
        <end position="161"/>
    </location>
</feature>
<feature type="compositionally biased region" description="Acidic residues" evidence="2">
    <location>
        <begin position="387"/>
        <end position="403"/>
    </location>
</feature>
<feature type="compositionally biased region" description="Basic and acidic residues" evidence="2">
    <location>
        <begin position="412"/>
        <end position="428"/>
    </location>
</feature>
<gene>
    <name evidence="1" type="primary">MDM12</name>
    <name type="ordered locus">CAALFM_C701180WA</name>
    <name type="ORF">CaJ7.0134</name>
    <name type="ORF">CaO19.6900</name>
</gene>
<sequence length="428" mass="48101">MSFDINWNQLTIDDTINQSIKEFLDQQFKNISLPSFISNLAVTDFNLGEIPPEVTIRHIGDPFEEFYEDENNLGVMNEANNDSKDEHLKNHGDGINKDSGYNSQNLDDEDEDDEDDDEDDEDEEEEDEDDYDDHDLGTINEGISLLNFNENSTTPSANSFAGSAAPPLPPPLNPSRDSFHSILHPYGVNSIIGATGAGSETPTNILNQNYLSSRVLPKISVKQKQPHHDDNDIQLIVEINYKGDMHINLLVNLLVNYPSPNFISLPIKLHITDIVIHSIATIAYLKKSVFLSFLCDVDDTFPDFDSNVQTPTSTTGGNFVDYYSNDATINKERIDIVKKIKIESEIGEVENNILRNVGKVEKFLVEQLRNILRDEIAWPSWICIDMNDDDDEEEEEEESEDNDGGNSDLNDNDGKHGDGRTDETEAGE</sequence>
<reference key="1">
    <citation type="journal article" date="2005" name="Genetics">
        <title>Sequence finishing and gene mapping for Candida albicans chromosome 7 and syntenic analysis against the Saccharomyces cerevisiae genome.</title>
        <authorList>
            <person name="Chibana H."/>
            <person name="Oka N."/>
            <person name="Nakayama H."/>
            <person name="Aoyama T."/>
            <person name="Magee B.B."/>
            <person name="Magee P.T."/>
            <person name="Mikami Y."/>
        </authorList>
    </citation>
    <scope>NUCLEOTIDE SEQUENCE [LARGE SCALE GENOMIC DNA]</scope>
    <source>
        <strain>SC5314 / ATCC MYA-2876</strain>
    </source>
</reference>
<reference key="2">
    <citation type="journal article" date="2004" name="Proc. Natl. Acad. Sci. U.S.A.">
        <title>The diploid genome sequence of Candida albicans.</title>
        <authorList>
            <person name="Jones T."/>
            <person name="Federspiel N.A."/>
            <person name="Chibana H."/>
            <person name="Dungan J."/>
            <person name="Kalman S."/>
            <person name="Magee B.B."/>
            <person name="Newport G."/>
            <person name="Thorstenson Y.R."/>
            <person name="Agabian N."/>
            <person name="Magee P.T."/>
            <person name="Davis R.W."/>
            <person name="Scherer S."/>
        </authorList>
    </citation>
    <scope>NUCLEOTIDE SEQUENCE [LARGE SCALE GENOMIC DNA]</scope>
    <source>
        <strain>SC5314 / ATCC MYA-2876</strain>
    </source>
</reference>
<reference key="3">
    <citation type="journal article" date="2007" name="Genome Biol.">
        <title>Assembly of the Candida albicans genome into sixteen supercontigs aligned on the eight chromosomes.</title>
        <authorList>
            <person name="van het Hoog M."/>
            <person name="Rast T.J."/>
            <person name="Martchenko M."/>
            <person name="Grindle S."/>
            <person name="Dignard D."/>
            <person name="Hogues H."/>
            <person name="Cuomo C."/>
            <person name="Berriman M."/>
            <person name="Scherer S."/>
            <person name="Magee B.B."/>
            <person name="Whiteway M."/>
            <person name="Chibana H."/>
            <person name="Nantel A."/>
            <person name="Magee P.T."/>
        </authorList>
    </citation>
    <scope>GENOME REANNOTATION</scope>
    <source>
        <strain>SC5314 / ATCC MYA-2876</strain>
    </source>
</reference>
<reference key="4">
    <citation type="journal article" date="2013" name="Genome Biol.">
        <title>Assembly of a phased diploid Candida albicans genome facilitates allele-specific measurements and provides a simple model for repeat and indel structure.</title>
        <authorList>
            <person name="Muzzey D."/>
            <person name="Schwartz K."/>
            <person name="Weissman J.S."/>
            <person name="Sherlock G."/>
        </authorList>
    </citation>
    <scope>NUCLEOTIDE SEQUENCE [LARGE SCALE GENOMIC DNA]</scope>
    <scope>GENOME REANNOTATION</scope>
    <source>
        <strain>SC5314 / ATCC MYA-2876</strain>
    </source>
</reference>
<keyword id="KW-0256">Endoplasmic reticulum</keyword>
<keyword id="KW-0445">Lipid transport</keyword>
<keyword id="KW-0446">Lipid-binding</keyword>
<keyword id="KW-0472">Membrane</keyword>
<keyword id="KW-0496">Mitochondrion</keyword>
<keyword id="KW-1000">Mitochondrion outer membrane</keyword>
<keyword id="KW-1185">Reference proteome</keyword>
<keyword id="KW-0813">Transport</keyword>
<organism>
    <name type="scientific">Candida albicans (strain SC5314 / ATCC MYA-2876)</name>
    <name type="common">Yeast</name>
    <dbReference type="NCBI Taxonomy" id="237561"/>
    <lineage>
        <taxon>Eukaryota</taxon>
        <taxon>Fungi</taxon>
        <taxon>Dikarya</taxon>
        <taxon>Ascomycota</taxon>
        <taxon>Saccharomycotina</taxon>
        <taxon>Pichiomycetes</taxon>
        <taxon>Debaryomycetaceae</taxon>
        <taxon>Candida/Lodderomyces clade</taxon>
        <taxon>Candida</taxon>
    </lineage>
</organism>
<accession>Q59S52</accession>
<accession>A0A1D8PQR1</accession>
<accession>Q3MPM0</accession>
<proteinExistence type="inferred from homology"/>
<protein>
    <recommendedName>
        <fullName evidence="1">Mitochondrial distribution and morphology protein 12</fullName>
    </recommendedName>
    <alternativeName>
        <fullName evidence="1">Mitochondrial inheritance component MDM12</fullName>
    </alternativeName>
</protein>
<name>MDM12_CANAL</name>
<dbReference type="EMBL" id="AP006852">
    <property type="protein sequence ID" value="BAE44640.1"/>
    <property type="molecule type" value="Genomic_DNA"/>
</dbReference>
<dbReference type="EMBL" id="CP017629">
    <property type="protein sequence ID" value="AOW30488.1"/>
    <property type="molecule type" value="Genomic_DNA"/>
</dbReference>
<dbReference type="RefSeq" id="XP_712472.1">
    <property type="nucleotide sequence ID" value="XM_707379.1"/>
</dbReference>
<dbReference type="SMR" id="Q59S52"/>
<dbReference type="FunCoup" id="Q59S52">
    <property type="interactions" value="61"/>
</dbReference>
<dbReference type="STRING" id="237561.Q59S52"/>
<dbReference type="EnsemblFungi" id="C7_01180W_A-T">
    <property type="protein sequence ID" value="C7_01180W_A-T-p1"/>
    <property type="gene ID" value="C7_01180W_A"/>
</dbReference>
<dbReference type="GeneID" id="3645915"/>
<dbReference type="KEGG" id="cal:CAALFM_C701180WA"/>
<dbReference type="CGD" id="CAL0000201825">
    <property type="gene designation" value="MDM12"/>
</dbReference>
<dbReference type="VEuPathDB" id="FungiDB:C7_01180W_A"/>
<dbReference type="eggNOG" id="ENOG502S3PB">
    <property type="taxonomic scope" value="Eukaryota"/>
</dbReference>
<dbReference type="HOGENOM" id="CLU_026794_2_0_1"/>
<dbReference type="InParanoid" id="Q59S52"/>
<dbReference type="OMA" id="KRAHFCF"/>
<dbReference type="OrthoDB" id="3356905at2759"/>
<dbReference type="Proteomes" id="UP000000559">
    <property type="component" value="Chromosome 7"/>
</dbReference>
<dbReference type="GO" id="GO:0005789">
    <property type="term" value="C:endoplasmic reticulum membrane"/>
    <property type="evidence" value="ECO:0007669"/>
    <property type="project" value="UniProtKB-SubCell"/>
</dbReference>
<dbReference type="GO" id="GO:0032865">
    <property type="term" value="C:ERMES complex"/>
    <property type="evidence" value="ECO:0000318"/>
    <property type="project" value="GO_Central"/>
</dbReference>
<dbReference type="GO" id="GO:0008289">
    <property type="term" value="F:lipid binding"/>
    <property type="evidence" value="ECO:0007669"/>
    <property type="project" value="UniProtKB-KW"/>
</dbReference>
<dbReference type="GO" id="GO:0000002">
    <property type="term" value="P:mitochondrial genome maintenance"/>
    <property type="evidence" value="ECO:0007669"/>
    <property type="project" value="UniProtKB-UniRule"/>
</dbReference>
<dbReference type="GO" id="GO:1990456">
    <property type="term" value="P:mitochondrion-endoplasmic reticulum membrane tethering"/>
    <property type="evidence" value="ECO:0000318"/>
    <property type="project" value="GO_Central"/>
</dbReference>
<dbReference type="GO" id="GO:0015914">
    <property type="term" value="P:phospholipid transport"/>
    <property type="evidence" value="ECO:0000318"/>
    <property type="project" value="GO_Central"/>
</dbReference>
<dbReference type="GO" id="GO:0045040">
    <property type="term" value="P:protein insertion into mitochondrial outer membrane"/>
    <property type="evidence" value="ECO:0007669"/>
    <property type="project" value="UniProtKB-UniRule"/>
</dbReference>
<dbReference type="CDD" id="cd21672">
    <property type="entry name" value="SMP_Mdm12"/>
    <property type="match status" value="1"/>
</dbReference>
<dbReference type="HAMAP" id="MF_03104">
    <property type="entry name" value="Mdm12"/>
    <property type="match status" value="1"/>
</dbReference>
<dbReference type="InterPro" id="IPR027532">
    <property type="entry name" value="Mdm12"/>
</dbReference>
<dbReference type="InterPro" id="IPR031468">
    <property type="entry name" value="SMP_LBD"/>
</dbReference>
<dbReference type="PANTHER" id="PTHR28204">
    <property type="entry name" value="MITOCHONDRIAL DISTRIBUTION AND MORPHOLOGY PROTEIN 12"/>
    <property type="match status" value="1"/>
</dbReference>
<dbReference type="PANTHER" id="PTHR28204:SF1">
    <property type="entry name" value="MITOCHONDRIAL DISTRIBUTION AND MORPHOLOGY PROTEIN 12"/>
    <property type="match status" value="1"/>
</dbReference>
<dbReference type="PROSITE" id="PS51847">
    <property type="entry name" value="SMP"/>
    <property type="match status" value="1"/>
</dbReference>